<dbReference type="EMBL" id="X83378">
    <property type="protein sequence ID" value="CAA58292.1"/>
    <property type="molecule type" value="mRNA"/>
</dbReference>
<dbReference type="EMBL" id="X96391">
    <property type="protein sequence ID" value="CAA65255.1"/>
    <property type="molecule type" value="mRNA"/>
</dbReference>
<dbReference type="EMBL" id="X99472">
    <property type="protein sequence ID" value="CAA67835.1"/>
    <property type="molecule type" value="Genomic_DNA"/>
</dbReference>
<dbReference type="EMBL" id="X99473">
    <property type="protein sequence ID" value="CAA67836.1"/>
    <property type="molecule type" value="mRNA"/>
</dbReference>
<dbReference type="EMBL" id="X99474">
    <property type="protein sequence ID" value="CAA67837.1"/>
    <property type="molecule type" value="mRNA"/>
</dbReference>
<dbReference type="EMBL" id="X99475">
    <property type="protein sequence ID" value="CAA67838.1"/>
    <property type="molecule type" value="mRNA"/>
</dbReference>
<dbReference type="EMBL" id="AF009257">
    <property type="protein sequence ID" value="AAB69287.1"/>
    <property type="molecule type" value="Genomic_DNA"/>
</dbReference>
<dbReference type="EMBL" id="AF009247">
    <property type="protein sequence ID" value="AAB69287.1"/>
    <property type="status" value="JOINED"/>
    <property type="molecule type" value="Genomic_DNA"/>
</dbReference>
<dbReference type="EMBL" id="AF009248">
    <property type="protein sequence ID" value="AAB69287.1"/>
    <property type="status" value="JOINED"/>
    <property type="molecule type" value="Genomic_DNA"/>
</dbReference>
<dbReference type="EMBL" id="AF009249">
    <property type="protein sequence ID" value="AAB69287.1"/>
    <property type="status" value="JOINED"/>
    <property type="molecule type" value="Genomic_DNA"/>
</dbReference>
<dbReference type="EMBL" id="AF009250">
    <property type="protein sequence ID" value="AAB69287.1"/>
    <property type="status" value="JOINED"/>
    <property type="molecule type" value="Genomic_DNA"/>
</dbReference>
<dbReference type="EMBL" id="AF009251">
    <property type="protein sequence ID" value="AAB69287.1"/>
    <property type="status" value="JOINED"/>
    <property type="molecule type" value="Genomic_DNA"/>
</dbReference>
<dbReference type="EMBL" id="AF009252">
    <property type="protein sequence ID" value="AAB69287.1"/>
    <property type="status" value="JOINED"/>
    <property type="molecule type" value="Genomic_DNA"/>
</dbReference>
<dbReference type="EMBL" id="AF009253">
    <property type="protein sequence ID" value="AAB69287.1"/>
    <property type="status" value="JOINED"/>
    <property type="molecule type" value="Genomic_DNA"/>
</dbReference>
<dbReference type="EMBL" id="AF009254">
    <property type="protein sequence ID" value="AAB69287.1"/>
    <property type="status" value="JOINED"/>
    <property type="molecule type" value="Genomic_DNA"/>
</dbReference>
<dbReference type="EMBL" id="AF009255">
    <property type="protein sequence ID" value="AAB69287.1"/>
    <property type="status" value="JOINED"/>
    <property type="molecule type" value="Genomic_DNA"/>
</dbReference>
<dbReference type="EMBL" id="AF009256">
    <property type="protein sequence ID" value="AAB69287.1"/>
    <property type="status" value="JOINED"/>
    <property type="molecule type" value="Genomic_DNA"/>
</dbReference>
<dbReference type="EMBL" id="D28475">
    <property type="protein sequence ID" value="BAA05836.4"/>
    <property type="molecule type" value="mRNA"/>
</dbReference>
<dbReference type="EMBL" id="AK289999">
    <property type="protein sequence ID" value="BAF82688.1"/>
    <property type="molecule type" value="mRNA"/>
</dbReference>
<dbReference type="EMBL" id="AK294764">
    <property type="protein sequence ID" value="BAG57898.1"/>
    <property type="molecule type" value="mRNA"/>
</dbReference>
<dbReference type="EMBL" id="AL021155">
    <property type="status" value="NOT_ANNOTATED_CDS"/>
    <property type="molecule type" value="Genomic_DNA"/>
</dbReference>
<dbReference type="EMBL" id="AL953897">
    <property type="status" value="NOT_ANNOTATED_CDS"/>
    <property type="molecule type" value="Genomic_DNA"/>
</dbReference>
<dbReference type="EMBL" id="CH471130">
    <property type="protein sequence ID" value="EAW71715.1"/>
    <property type="molecule type" value="Genomic_DNA"/>
</dbReference>
<dbReference type="EMBL" id="BC117420">
    <property type="protein sequence ID" value="AAI17421.1"/>
    <property type="molecule type" value="mRNA"/>
</dbReference>
<dbReference type="EMBL" id="BC117424">
    <property type="protein sequence ID" value="AAI17425.1"/>
    <property type="molecule type" value="mRNA"/>
</dbReference>
<dbReference type="CCDS" id="CCDS138.1">
    <molecule id="P51797-1"/>
</dbReference>
<dbReference type="CCDS" id="CCDS57972.1">
    <molecule id="P51797-6"/>
</dbReference>
<dbReference type="PIR" id="S68428">
    <property type="entry name" value="S68428"/>
</dbReference>
<dbReference type="RefSeq" id="NP_001243888.2">
    <molecule id="P51797-6"/>
    <property type="nucleotide sequence ID" value="NM_001256959.2"/>
</dbReference>
<dbReference type="RefSeq" id="NP_001277.2">
    <molecule id="P51797-1"/>
    <property type="nucleotide sequence ID" value="NM_001286.5"/>
</dbReference>
<dbReference type="PDB" id="8JPJ">
    <property type="method" value="EM"/>
    <property type="resolution" value="3.50 A"/>
    <property type="chains" value="A/B=1-869"/>
</dbReference>
<dbReference type="PDB" id="8JPO">
    <property type="method" value="EM"/>
    <property type="resolution" value="3.40 A"/>
    <property type="chains" value="A/B=1-869"/>
</dbReference>
<dbReference type="PDB" id="8JPR">
    <property type="method" value="EM"/>
    <property type="resolution" value="3.40 A"/>
    <property type="chains" value="A/B=1-869"/>
</dbReference>
<dbReference type="PDBsum" id="8JPJ"/>
<dbReference type="PDBsum" id="8JPO"/>
<dbReference type="PDBsum" id="8JPR"/>
<dbReference type="EMDB" id="EMD-36481"/>
<dbReference type="EMDB" id="EMD-36485"/>
<dbReference type="EMDB" id="EMD-36487"/>
<dbReference type="SMR" id="P51797"/>
<dbReference type="BioGRID" id="107599">
    <property type="interactions" value="7"/>
</dbReference>
<dbReference type="FunCoup" id="P51797">
    <property type="interactions" value="1237"/>
</dbReference>
<dbReference type="IntAct" id="P51797">
    <property type="interactions" value="4"/>
</dbReference>
<dbReference type="MINT" id="P51797"/>
<dbReference type="STRING" id="9606.ENSP00000234488"/>
<dbReference type="GuidetoPHARMACOLOGY" id="705"/>
<dbReference type="GlyCosmos" id="P51797">
    <property type="glycosylation" value="3 sites, No reported glycans"/>
</dbReference>
<dbReference type="GlyGen" id="P51797">
    <property type="glycosylation" value="3 sites"/>
</dbReference>
<dbReference type="iPTMnet" id="P51797"/>
<dbReference type="PhosphoSitePlus" id="P51797"/>
<dbReference type="SwissPalm" id="P51797"/>
<dbReference type="BioMuta" id="CLCN6"/>
<dbReference type="DMDM" id="311033364"/>
<dbReference type="jPOST" id="P51797"/>
<dbReference type="MassIVE" id="P51797"/>
<dbReference type="PaxDb" id="9606-ENSP00000234488"/>
<dbReference type="PeptideAtlas" id="P51797"/>
<dbReference type="ProteomicsDB" id="30368"/>
<dbReference type="ProteomicsDB" id="56393">
    <molecule id="P51797-1"/>
</dbReference>
<dbReference type="ProteomicsDB" id="56394">
    <molecule id="P51797-2"/>
</dbReference>
<dbReference type="ProteomicsDB" id="56395">
    <molecule id="P51797-3"/>
</dbReference>
<dbReference type="ProteomicsDB" id="56396">
    <molecule id="P51797-4"/>
</dbReference>
<dbReference type="ProteomicsDB" id="56397">
    <molecule id="P51797-5"/>
</dbReference>
<dbReference type="Antibodypedia" id="28262">
    <property type="antibodies" value="102 antibodies from 21 providers"/>
</dbReference>
<dbReference type="DNASU" id="1185"/>
<dbReference type="Ensembl" id="ENST00000312413.10">
    <molecule id="P51797-6"/>
    <property type="protein sequence ID" value="ENSP00000308367.7"/>
    <property type="gene ID" value="ENSG00000011021.23"/>
</dbReference>
<dbReference type="Ensembl" id="ENST00000346436.11">
    <molecule id="P51797-1"/>
    <property type="protein sequence ID" value="ENSP00000234488.9"/>
    <property type="gene ID" value="ENSG00000011021.23"/>
</dbReference>
<dbReference type="Ensembl" id="ENST00000376496.4">
    <molecule id="P51797-5"/>
    <property type="protein sequence ID" value="ENSP00000365679.3"/>
    <property type="gene ID" value="ENSG00000011021.23"/>
</dbReference>
<dbReference type="GeneID" id="1185"/>
<dbReference type="KEGG" id="hsa:1185"/>
<dbReference type="MANE-Select" id="ENST00000346436.11">
    <property type="protein sequence ID" value="ENSP00000234488.9"/>
    <property type="RefSeq nucleotide sequence ID" value="NM_001286.5"/>
    <property type="RefSeq protein sequence ID" value="NP_001277.2"/>
</dbReference>
<dbReference type="UCSC" id="uc001ate.6">
    <molecule id="P51797-1"/>
    <property type="organism name" value="human"/>
</dbReference>
<dbReference type="AGR" id="HGNC:2024"/>
<dbReference type="CTD" id="1185"/>
<dbReference type="DisGeNET" id="1185"/>
<dbReference type="GeneCards" id="CLCN6"/>
<dbReference type="HGNC" id="HGNC:2024">
    <property type="gene designation" value="CLCN6"/>
</dbReference>
<dbReference type="HPA" id="ENSG00000011021">
    <property type="expression patterns" value="Low tissue specificity"/>
</dbReference>
<dbReference type="MalaCards" id="CLCN6"/>
<dbReference type="MIM" id="602726">
    <property type="type" value="gene"/>
</dbReference>
<dbReference type="MIM" id="619173">
    <property type="type" value="phenotype"/>
</dbReference>
<dbReference type="neXtProt" id="NX_P51797"/>
<dbReference type="OpenTargets" id="ENSG00000011021"/>
<dbReference type="Orphanet" id="610573">
    <property type="disease" value="CLCN6-related childhood-onset progressive neurodegeneration-peripheral neuropathy syndrome"/>
</dbReference>
<dbReference type="PharmGKB" id="PA26551"/>
<dbReference type="VEuPathDB" id="HostDB:ENSG00000011021"/>
<dbReference type="eggNOG" id="KOG0474">
    <property type="taxonomic scope" value="Eukaryota"/>
</dbReference>
<dbReference type="GeneTree" id="ENSGT00940000159291"/>
<dbReference type="HOGENOM" id="CLU_003181_4_1_1"/>
<dbReference type="InParanoid" id="P51797"/>
<dbReference type="OMA" id="FARIDHG"/>
<dbReference type="OrthoDB" id="428525at2759"/>
<dbReference type="PAN-GO" id="P51797">
    <property type="GO annotations" value="2 GO annotations based on evolutionary models"/>
</dbReference>
<dbReference type="PhylomeDB" id="P51797"/>
<dbReference type="TreeFam" id="TF313867"/>
<dbReference type="PathwayCommons" id="P51797"/>
<dbReference type="Reactome" id="R-HSA-2672351">
    <property type="pathway name" value="Stimuli-sensing channels"/>
</dbReference>
<dbReference type="Reactome" id="R-HSA-6802952">
    <property type="pathway name" value="Signaling by BRAF and RAF1 fusions"/>
</dbReference>
<dbReference type="SignaLink" id="P51797"/>
<dbReference type="BioGRID-ORCS" id="1185">
    <property type="hits" value="18 hits in 1160 CRISPR screens"/>
</dbReference>
<dbReference type="ChiTaRS" id="CLCN6">
    <property type="organism name" value="human"/>
</dbReference>
<dbReference type="GeneWiki" id="CLCN6"/>
<dbReference type="GenomeRNAi" id="1185"/>
<dbReference type="Pharos" id="P51797">
    <property type="development level" value="Tchem"/>
</dbReference>
<dbReference type="PRO" id="PR:P51797"/>
<dbReference type="Proteomes" id="UP000005640">
    <property type="component" value="Chromosome 1"/>
</dbReference>
<dbReference type="RNAct" id="P51797">
    <property type="molecule type" value="protein"/>
</dbReference>
<dbReference type="Bgee" id="ENSG00000011021">
    <property type="expression patterns" value="Expressed in right testis and 156 other cell types or tissues"/>
</dbReference>
<dbReference type="ExpressionAtlas" id="P51797">
    <property type="expression patterns" value="baseline and differential"/>
</dbReference>
<dbReference type="GO" id="GO:0010008">
    <property type="term" value="C:endosome membrane"/>
    <property type="evidence" value="ECO:0000304"/>
    <property type="project" value="Reactome"/>
</dbReference>
<dbReference type="GO" id="GO:0043231">
    <property type="term" value="C:intracellular membrane-bounded organelle"/>
    <property type="evidence" value="ECO:0000318"/>
    <property type="project" value="GO_Central"/>
</dbReference>
<dbReference type="GO" id="GO:0031902">
    <property type="term" value="C:late endosome membrane"/>
    <property type="evidence" value="ECO:0007669"/>
    <property type="project" value="UniProtKB-SubCell"/>
</dbReference>
<dbReference type="GO" id="GO:0005765">
    <property type="term" value="C:lysosomal membrane"/>
    <property type="evidence" value="ECO:0007005"/>
    <property type="project" value="UniProtKB"/>
</dbReference>
<dbReference type="GO" id="GO:0016020">
    <property type="term" value="C:membrane"/>
    <property type="evidence" value="ECO:0000303"/>
    <property type="project" value="UniProtKB"/>
</dbReference>
<dbReference type="GO" id="GO:0015297">
    <property type="term" value="F:antiporter activity"/>
    <property type="evidence" value="ECO:0000304"/>
    <property type="project" value="Reactome"/>
</dbReference>
<dbReference type="GO" id="GO:0005524">
    <property type="term" value="F:ATP binding"/>
    <property type="evidence" value="ECO:0007669"/>
    <property type="project" value="UniProtKB-KW"/>
</dbReference>
<dbReference type="GO" id="GO:0015108">
    <property type="term" value="F:chloride transmembrane transporter activity"/>
    <property type="evidence" value="ECO:0000318"/>
    <property type="project" value="GO_Central"/>
</dbReference>
<dbReference type="GO" id="GO:0005247">
    <property type="term" value="F:voltage-gated chloride channel activity"/>
    <property type="evidence" value="ECO:0000314"/>
    <property type="project" value="UniProtKB"/>
</dbReference>
<dbReference type="GO" id="GO:0006884">
    <property type="term" value="P:cell volume homeostasis"/>
    <property type="evidence" value="ECO:0000303"/>
    <property type="project" value="UniProtKB"/>
</dbReference>
<dbReference type="GO" id="GO:0006821">
    <property type="term" value="P:chloride transport"/>
    <property type="evidence" value="ECO:0000314"/>
    <property type="project" value="UniProtKB"/>
</dbReference>
<dbReference type="GO" id="GO:0034220">
    <property type="term" value="P:monoatomic ion transmembrane transport"/>
    <property type="evidence" value="ECO:0000304"/>
    <property type="project" value="Reactome"/>
</dbReference>
<dbReference type="GO" id="GO:0009612">
    <property type="term" value="P:response to mechanical stimulus"/>
    <property type="evidence" value="ECO:0007669"/>
    <property type="project" value="Ensembl"/>
</dbReference>
<dbReference type="GO" id="GO:0007165">
    <property type="term" value="P:signal transduction"/>
    <property type="evidence" value="ECO:0000303"/>
    <property type="project" value="UniProtKB"/>
</dbReference>
<dbReference type="CDD" id="cd04591">
    <property type="entry name" value="CBS_pair_voltage-gated_CLC_euk_bac"/>
    <property type="match status" value="1"/>
</dbReference>
<dbReference type="CDD" id="cd03685">
    <property type="entry name" value="ClC_6_like"/>
    <property type="match status" value="1"/>
</dbReference>
<dbReference type="FunFam" id="3.10.580.10:FF:000010">
    <property type="entry name" value="Chloride voltage-gated channel 6"/>
    <property type="match status" value="1"/>
</dbReference>
<dbReference type="Gene3D" id="3.10.580.10">
    <property type="entry name" value="CBS-domain"/>
    <property type="match status" value="1"/>
</dbReference>
<dbReference type="Gene3D" id="1.10.3080.10">
    <property type="entry name" value="Clc chloride channel"/>
    <property type="match status" value="1"/>
</dbReference>
<dbReference type="InterPro" id="IPR000644">
    <property type="entry name" value="CBS_dom"/>
</dbReference>
<dbReference type="InterPro" id="IPR046342">
    <property type="entry name" value="CBS_dom_sf"/>
</dbReference>
<dbReference type="InterPro" id="IPR051280">
    <property type="entry name" value="Cl-channel/antiporter"/>
</dbReference>
<dbReference type="InterPro" id="IPR014743">
    <property type="entry name" value="Cl-channel_core"/>
</dbReference>
<dbReference type="InterPro" id="IPR002248">
    <property type="entry name" value="Cl_channel-6"/>
</dbReference>
<dbReference type="InterPro" id="IPR001807">
    <property type="entry name" value="ClC"/>
</dbReference>
<dbReference type="PANTHER" id="PTHR11689">
    <property type="entry name" value="CHLORIDE CHANNEL PROTEIN CLC FAMILY MEMBER"/>
    <property type="match status" value="1"/>
</dbReference>
<dbReference type="PANTHER" id="PTHR11689:SF158">
    <property type="entry name" value="H(+)_CL(-) EXCHANGE TRANSPORTER 6"/>
    <property type="match status" value="1"/>
</dbReference>
<dbReference type="Pfam" id="PF00571">
    <property type="entry name" value="CBS"/>
    <property type="match status" value="2"/>
</dbReference>
<dbReference type="Pfam" id="PF00654">
    <property type="entry name" value="Voltage_CLC"/>
    <property type="match status" value="1"/>
</dbReference>
<dbReference type="PRINTS" id="PR00762">
    <property type="entry name" value="CLCHANNEL"/>
</dbReference>
<dbReference type="PRINTS" id="PR01117">
    <property type="entry name" value="CLCHANNEL6"/>
</dbReference>
<dbReference type="SMART" id="SM00116">
    <property type="entry name" value="CBS"/>
    <property type="match status" value="2"/>
</dbReference>
<dbReference type="SUPFAM" id="SSF54631">
    <property type="entry name" value="CBS-domain pair"/>
    <property type="match status" value="1"/>
</dbReference>
<dbReference type="SUPFAM" id="SSF81340">
    <property type="entry name" value="Clc chloride channel"/>
    <property type="match status" value="1"/>
</dbReference>
<dbReference type="PROSITE" id="PS51371">
    <property type="entry name" value="CBS"/>
    <property type="match status" value="2"/>
</dbReference>
<proteinExistence type="evidence at protein level"/>
<comment type="function">
    <text evidence="9">Voltage-gated channel mediating the exchange of chloride ions against protons. Functions as antiporter and contributes to the acidification of the late endosome lumen. The CLC channel family contains both chloride channels and proton-coupled anion transporters that exchange chloride or another anion for protons. The presence of conserved gating glutamate residues is typical for family members that function as antiporters.</text>
</comment>
<comment type="catalytic activity">
    <reaction evidence="9 10">
        <text>2 chloride(in) + H(+)(out) = 2 chloride(out) + H(+)(in)</text>
        <dbReference type="Rhea" id="RHEA:29567"/>
        <dbReference type="ChEBI" id="CHEBI:15378"/>
        <dbReference type="ChEBI" id="CHEBI:17996"/>
    </reaction>
    <physiologicalReaction direction="left-to-right" evidence="9 10">
        <dbReference type="Rhea" id="RHEA:29568"/>
    </physiologicalReaction>
</comment>
<comment type="subcellular location">
    <subcellularLocation>
        <location evidence="8 10">Late endosome membrane</location>
        <topology evidence="8">Multi-pass membrane protein</topology>
    </subcellularLocation>
</comment>
<comment type="alternative products">
    <event type="alternative splicing"/>
    <isoform>
        <id>P51797-1</id>
        <name>1</name>
        <name>A</name>
        <name>Clc-6a</name>
        <sequence type="displayed"/>
    </isoform>
    <isoform>
        <id>P51797-2</id>
        <name>2</name>
        <name>B</name>
        <name>ClC-6b</name>
        <name>D2-A1</name>
        <sequence type="described" ref="VSP_001043 VSP_001044"/>
    </isoform>
    <isoform>
        <id>P51797-3</id>
        <name>3</name>
        <name>C</name>
        <name>ClC-6c</name>
        <name>D1-A1</name>
        <sequence type="described" ref="VSP_001045 VSP_001046"/>
    </isoform>
    <isoform>
        <id>P51797-4</id>
        <name>4</name>
        <name>D</name>
        <name>ClC-6d</name>
        <name>D1-A2</name>
        <sequence type="described" ref="VSP_001047 VSP_001048"/>
    </isoform>
    <isoform>
        <id>P51797-5</id>
        <name>5</name>
        <sequence type="described" ref="VSP_017188"/>
    </isoform>
    <isoform>
        <id>P51797-6</id>
        <name>6</name>
        <sequence type="described" ref="VSP_047169"/>
    </isoform>
</comment>
<comment type="tissue specificity">
    <text evidence="4 12 13">Testis, ovary, small intestine, brain and skeletal muscle. Low level expression in aortic and coronary vascular smooth muscle cells, and aortic endothelial cells. Isoform 3 is only detected in kidney.</text>
</comment>
<comment type="PTM">
    <text evidence="8">N-glycosylated on several asparagine residues.</text>
</comment>
<comment type="disease" evidence="10">
    <disease id="DI-06027">
        <name>Ceroid lipofuscinosis, neuronal, 15</name>
        <acronym>CLN15</acronym>
        <description>An autosomal dominant, progressive, neurodegenerative disorder characterized by severe global developmental delay, impaired intellectual development, poor or absent speech, hypotonia, impaired motor development, respiratory insufficiency, and feeding difficulties. Most patients have visual defects, including cortical visual blindness, nystagmus, and esotropia. Brain imaging shows abnormalities affecting the brainstem, cerebellum, and corticospinal tracts. Disease onset is in infancy or early childhood.</description>
        <dbReference type="MIM" id="619173"/>
    </disease>
    <text>The disease is caused by variants affecting the gene represented in this entry.</text>
</comment>
<comment type="similarity">
    <text evidence="17">Belongs to the chloride channel (TC 2.A.49) family. ClC-6/CLCN6 subfamily.</text>
</comment>
<sequence>MAGCRGSLCCCCRWCCCCGERETRTPEELTILGETQEEEDEILPRKDYESLDYDRCINDPYLEVLETMDNKKGRRYEAVKWMVVFAIGVCTGLVGLFVDFFVRLFTQLKFGVVQTSVEECSQKGCLALSLLELLGFNLTFVFLASLLVLIEPVAAGSGIPEVKCYLNGVKVPGIVRLRTLLCKVLGVLFSVAGGLFVEKEGPMIHSGSVVGAGLPQFQSISLRKIQFNFPYFRSDRDKRDFVSAGAAAGVAAAFGAPIGGTLFSLEEGSSFWNQGLTWKVLFCSMSATFTLNFFRSGIQFGSWGSFQLPGLLNFGEFKCSDSDKKCHLWTAMDLGFFVVMGVIGGLLGATFNCLNKRLAKYRMRNVHPKPKLVRVLESLLVSLVTTVVVFVASMVLGECRQMSSSSQIGNDSFQLQVTEDVNSSIKTFFCPNDTYNDMATLFFNPQESAILQLFHQDGTFSPVTLALFFVLYFLLACWTYGISVPSGLFVPSLLCGAAFGRLVANVLKSYIGLGHIYSGTFALIGAAAFLGGVVRMTISLTVILIESTNEITYGLPIMVTLMVAKWTGDFFNKGIYDIHVGLRGVPLLEWETEVEMDKLRASDIMEPNLTYVYPHTRIQSLVSILRTTVHHAFPVVTENRGNEKEFMKGNQLISNNIKFKKSSILTRAGEQRKRSQSMKSYPSSELRNMCDEHIASEEPAEKEDLLQQMLERRYTPYPNLYPDQSPSEDWTMEERFRPLTFHGLILRSQLVTLLVRGVCYSESQSSASQPRLSYAEMAEDYPRYPDIHDLDLTLLNPRMIVDVTPYMNPSPFTVSPNTHVSQVFNLFRTMGLRHLPVVNAVGEIVGIITRHNLTYEFLQARLRQHYQTI</sequence>
<name>CLCN6_HUMAN</name>
<organism>
    <name type="scientific">Homo sapiens</name>
    <name type="common">Human</name>
    <dbReference type="NCBI Taxonomy" id="9606"/>
    <lineage>
        <taxon>Eukaryota</taxon>
        <taxon>Metazoa</taxon>
        <taxon>Chordata</taxon>
        <taxon>Craniata</taxon>
        <taxon>Vertebrata</taxon>
        <taxon>Euteleostomi</taxon>
        <taxon>Mammalia</taxon>
        <taxon>Eutheria</taxon>
        <taxon>Euarchontoglires</taxon>
        <taxon>Primates</taxon>
        <taxon>Haplorrhini</taxon>
        <taxon>Catarrhini</taxon>
        <taxon>Hominidae</taxon>
        <taxon>Homo</taxon>
    </lineage>
</organism>
<evidence type="ECO:0000250" key="1"/>
<evidence type="ECO:0000250" key="2">
    <source>
        <dbReference type="UniProtKB" id="O35454"/>
    </source>
</evidence>
<evidence type="ECO:0000255" key="3">
    <source>
        <dbReference type="PROSITE-ProRule" id="PRU00703"/>
    </source>
</evidence>
<evidence type="ECO:0000269" key="4">
    <source>
    </source>
</evidence>
<evidence type="ECO:0000269" key="5">
    <source>
    </source>
</evidence>
<evidence type="ECO:0000269" key="6">
    <source>
    </source>
</evidence>
<evidence type="ECO:0000269" key="7">
    <source>
    </source>
</evidence>
<evidence type="ECO:0000269" key="8">
    <source>
    </source>
</evidence>
<evidence type="ECO:0000269" key="9">
    <source>
    </source>
</evidence>
<evidence type="ECO:0000269" key="10">
    <source>
    </source>
</evidence>
<evidence type="ECO:0000269" key="11">
    <source>
    </source>
</evidence>
<evidence type="ECO:0000269" key="12">
    <source>
    </source>
</evidence>
<evidence type="ECO:0000269" key="13">
    <source>
    </source>
</evidence>
<evidence type="ECO:0000269" key="14">
    <source ref="8"/>
</evidence>
<evidence type="ECO:0000303" key="15">
    <source>
    </source>
</evidence>
<evidence type="ECO:0000303" key="16">
    <source>
    </source>
</evidence>
<evidence type="ECO:0000305" key="17"/>
<evidence type="ECO:0000312" key="18">
    <source>
        <dbReference type="HGNC" id="HGNC:2024"/>
    </source>
</evidence>
<evidence type="ECO:0007829" key="19">
    <source>
        <dbReference type="PDB" id="8JPJ"/>
    </source>
</evidence>
<evidence type="ECO:0007829" key="20">
    <source>
        <dbReference type="PDB" id="8JPO"/>
    </source>
</evidence>
<feature type="chain" id="PRO_0000094449" description="H(+)/Cl(-) exchange transporter 6">
    <location>
        <begin position="1"/>
        <end position="869"/>
    </location>
</feature>
<feature type="topological domain" description="Cytoplasmic" evidence="1">
    <location>
        <begin position="1"/>
        <end position="80"/>
    </location>
</feature>
<feature type="transmembrane region" description="Helical" evidence="1">
    <location>
        <begin position="81"/>
        <end position="113"/>
    </location>
</feature>
<feature type="transmembrane region" description="Helical" evidence="1">
    <location>
        <begin position="128"/>
        <end position="150"/>
    </location>
</feature>
<feature type="intramembrane region" description="Helical" evidence="1">
    <location>
        <begin position="159"/>
        <end position="166"/>
    </location>
</feature>
<feature type="transmembrane region" description="Helical" evidence="1">
    <location>
        <begin position="176"/>
        <end position="194"/>
    </location>
</feature>
<feature type="transmembrane region" description="Helical" evidence="1">
    <location>
        <begin position="200"/>
        <end position="217"/>
    </location>
</feature>
<feature type="intramembrane region" description="Helical" evidence="1">
    <location>
        <begin position="241"/>
        <end position="253"/>
    </location>
</feature>
<feature type="intramembrane region" description="Helical" evidence="1">
    <location>
        <begin position="257"/>
        <end position="265"/>
    </location>
</feature>
<feature type="transmembrane region" description="Helical" evidence="1">
    <location>
        <begin position="277"/>
        <end position="294"/>
    </location>
</feature>
<feature type="transmembrane region" description="Helical" evidence="1">
    <location>
        <begin position="335"/>
        <end position="364"/>
    </location>
</feature>
<feature type="transmembrane region" description="Helical" evidence="1">
    <location>
        <begin position="371"/>
        <end position="392"/>
    </location>
</feature>
<feature type="transmembrane region" description="Helical" evidence="1">
    <location>
        <begin position="462"/>
        <end position="481"/>
    </location>
</feature>
<feature type="transmembrane region" description="Helical" evidence="1">
    <location>
        <begin position="487"/>
        <end position="511"/>
    </location>
</feature>
<feature type="intramembrane region" description="Helical" evidence="1">
    <location>
        <begin position="519"/>
        <end position="533"/>
    </location>
</feature>
<feature type="intramembrane region" description="Note=Loop between two helices" evidence="1">
    <location>
        <begin position="534"/>
        <end position="536"/>
    </location>
</feature>
<feature type="intramembrane region" description="Helical" evidence="1">
    <location>
        <begin position="537"/>
        <end position="548"/>
    </location>
</feature>
<feature type="intramembrane region" description="Note=Loop between two helices" evidence="1">
    <location>
        <begin position="549"/>
        <end position="552"/>
    </location>
</feature>
<feature type="transmembrane region" description="Helical" evidence="1">
    <location>
        <begin position="553"/>
        <end position="571"/>
    </location>
</feature>
<feature type="topological domain" description="Cytoplasmic" evidence="1">
    <location>
        <begin position="572"/>
        <end position="869"/>
    </location>
</feature>
<feature type="domain" description="CBS 1" evidence="3">
    <location>
        <begin position="605"/>
        <end position="662"/>
    </location>
</feature>
<feature type="domain" description="CBS 2" evidence="3">
    <location>
        <begin position="807"/>
        <end position="868"/>
    </location>
</feature>
<feature type="short sequence motif" description="Selectivity filter part_1" evidence="1">
    <location>
        <begin position="156"/>
        <end position="160"/>
    </location>
</feature>
<feature type="short sequence motif" description="Selectivity filter part_2" evidence="1">
    <location>
        <begin position="198"/>
        <end position="202"/>
    </location>
</feature>
<feature type="short sequence motif" description="Selectivity filter part_3" evidence="1">
    <location>
        <begin position="487"/>
        <end position="491"/>
    </location>
</feature>
<feature type="binding site" evidence="1">
    <location>
        <position position="157"/>
    </location>
    <ligand>
        <name>chloride</name>
        <dbReference type="ChEBI" id="CHEBI:17996"/>
    </ligand>
</feature>
<feature type="binding site" evidence="1">
    <location>
        <position position="489"/>
    </location>
    <ligand>
        <name>chloride</name>
        <dbReference type="ChEBI" id="CHEBI:17996"/>
    </ligand>
</feature>
<feature type="binding site" evidence="1">
    <location>
        <position position="576"/>
    </location>
    <ligand>
        <name>chloride</name>
        <dbReference type="ChEBI" id="CHEBI:17996"/>
    </ligand>
</feature>
<feature type="binding site" evidence="1">
    <location>
        <begin position="630"/>
        <end position="632"/>
    </location>
    <ligand>
        <name>ATP</name>
        <dbReference type="ChEBI" id="CHEBI:30616"/>
    </ligand>
</feature>
<feature type="binding site" evidence="1">
    <location>
        <begin position="849"/>
        <end position="852"/>
    </location>
    <ligand>
        <name>ATP</name>
        <dbReference type="ChEBI" id="CHEBI:30616"/>
    </ligand>
</feature>
<feature type="site" description="Mediates proton transfer from the outer aqueous phase to the interior of the protein; involved in linking H(+) and Cl(-) transport" evidence="1">
    <location>
        <position position="200"/>
    </location>
</feature>
<feature type="site" description="Mediates proton transfer from the protein to the inner aqueous phase" evidence="1">
    <location>
        <position position="267"/>
    </location>
</feature>
<feature type="modified residue" description="Phosphoserine" evidence="2">
    <location>
        <position position="773"/>
    </location>
</feature>
<feature type="glycosylation site" description="N-linked (GlcNAc...) asparagine" evidence="8">
    <location>
        <position position="410"/>
    </location>
</feature>
<feature type="glycosylation site" description="N-linked (GlcNAc...) asparagine" evidence="8">
    <location>
        <position position="422"/>
    </location>
</feature>
<feature type="glycosylation site" description="N-linked (GlcNAc...) asparagine" evidence="8">
    <location>
        <position position="432"/>
    </location>
</feature>
<feature type="splice variant" id="VSP_047169" description="In isoform 6." evidence="15">
    <location>
        <begin position="50"/>
        <end position="71"/>
    </location>
</feature>
<feature type="splice variant" id="VSP_001043" description="In isoform 2." evidence="16">
    <original>DKRDFVSAGAAAGVAAAFGAPIGGTLFSLEEGSSFWNQGLTWKVLFCSMSATFTLNFFRSGIQFGSWGSFQLPGLLNFGEFKCS</original>
    <variation>YGKRQERLCISRSGCWSCCSFRGANRGYLVQSRGGFVLLEPRAHVESALLFHVCHLHPQLLPFWDSVWKLGFLPAPWIAELWRV</variation>
    <location>
        <begin position="237"/>
        <end position="320"/>
    </location>
</feature>
<feature type="splice variant" id="VSP_001047" description="In isoform 4." evidence="16">
    <original>DKRDFVSAGAAAGVAAAFGAPIGGTLFSLEEGSSFWNQGLTWKVLFCSMSATFTLNFFRSGIQFGSWGSFQL</original>
    <variation>SGCWSCCSFRGANRGYLVQSRGGFVLLEPRAHVESALLFHVCHLHPQLLPFWDSVWKLGFLPAPWIAELWRV</variation>
    <location>
        <begin position="237"/>
        <end position="308"/>
    </location>
</feature>
<feature type="splice variant" id="VSP_001048" description="In isoform 4." evidence="16">
    <location>
        <begin position="309"/>
        <end position="869"/>
    </location>
</feature>
<feature type="splice variant" id="VSP_001045" description="In isoform 3." evidence="16">
    <original>CSDSDKKCHLWTAMDLGFFVVMGVIGGLLGATFNC</original>
    <variation>SLREPPCVSGNHRGGVCGLDGVRRMPTDVLFESNR</variation>
    <location>
        <begin position="319"/>
        <end position="353"/>
    </location>
</feature>
<feature type="splice variant" id="VSP_001044" description="In isoform 2." evidence="16">
    <location>
        <begin position="321"/>
        <end position="869"/>
    </location>
</feature>
<feature type="splice variant" id="VSP_001046" description="In isoform 3." evidence="16">
    <location>
        <begin position="354"/>
        <end position="869"/>
    </location>
</feature>
<feature type="splice variant" id="VSP_017188" description="In isoform 5." evidence="17">
    <original>IVGIITRHNLTYEFLQARLRQHYQTI</original>
    <variation>VSEAPALPPPLREDPLARCCLCTQASHQKRRHPTRRGECGPTLALNPARLPCTRDPFPCLPADGTSVPLAVLSSQSRASTRLCLPPEMLLFTPYHWCSLVLHLRRDLRIR</variation>
    <location>
        <begin position="844"/>
        <end position="869"/>
    </location>
</feature>
<feature type="sequence variant" id="VAR_023051" description="In dbSNP:rs198400." evidence="5 6 7 11 12 13 14">
    <original>E</original>
    <variation>G</variation>
    <location>
        <position position="198"/>
    </location>
</feature>
<feature type="sequence variant" id="VAR_085384" description="In CLN15; strongly slowed gating and increased current amplitudes; dbSNP:rs1644918844." evidence="10">
    <original>Y</original>
    <variation>C</variation>
    <location>
        <position position="553"/>
    </location>
</feature>
<feature type="mutagenesis site" description="Increases the nitrate/chloride conductance ratio." evidence="9">
    <original>S</original>
    <variation>P</variation>
    <location>
        <position position="157"/>
    </location>
</feature>
<feature type="mutagenesis site" description="Abolishes proton transport, but not chloride transport. Strongly increases anion current; when associated with S-576." evidence="9">
    <original>E</original>
    <variation>A</variation>
    <location>
        <position position="200"/>
    </location>
</feature>
<feature type="mutagenesis site" description="Loss of proton and chloride transport." evidence="9">
    <original>E</original>
    <variation>A</variation>
    <location>
        <position position="267"/>
    </location>
</feature>
<feature type="mutagenesis site" description="Abolishes N-glycosylation; when associated with A-422 and A-432." evidence="8">
    <original>N</original>
    <variation>A</variation>
    <location>
        <position position="410"/>
    </location>
</feature>
<feature type="mutagenesis site" description="Abolishes N-glycosylation; when associated with A-410 and A-432." evidence="8">
    <original>N</original>
    <variation>A</variation>
    <location>
        <position position="422"/>
    </location>
</feature>
<feature type="mutagenesis site" description="Abolishes N-glycosylation; when associated with A-410 and A-422." evidence="8">
    <original>N</original>
    <variation>A</variation>
    <location>
        <position position="432"/>
    </location>
</feature>
<feature type="mutagenesis site" description="Strongly increases anion current; when associated with A-200." evidence="9">
    <original>Y</original>
    <variation>S</variation>
    <location>
        <position position="576"/>
    </location>
</feature>
<feature type="sequence conflict" description="In Ref. 6; BAG57898." evidence="17" ref="6">
    <original>G</original>
    <variation>S</variation>
    <location>
        <position position="19"/>
    </location>
</feature>
<feature type="sequence conflict" description="In Ref. 6; BAG57898." evidence="17" ref="6">
    <original>G</original>
    <variation>D</variation>
    <location>
        <position position="92"/>
    </location>
</feature>
<feature type="sequence conflict" description="In Ref. 6; BAG57898." evidence="17" ref="6">
    <original>F</original>
    <variation>S</variation>
    <location>
        <position position="442"/>
    </location>
</feature>
<feature type="helix" evidence="20">
    <location>
        <begin position="59"/>
        <end position="67"/>
    </location>
</feature>
<feature type="helix" evidence="20">
    <location>
        <begin position="70"/>
        <end position="122"/>
    </location>
</feature>
<feature type="helix" evidence="20">
    <location>
        <begin position="128"/>
        <end position="150"/>
    </location>
</feature>
<feature type="helix" evidence="20">
    <location>
        <begin position="152"/>
        <end position="154"/>
    </location>
</feature>
<feature type="helix" evidence="20">
    <location>
        <begin position="159"/>
        <end position="161"/>
    </location>
</feature>
<feature type="helix" evidence="20">
    <location>
        <begin position="162"/>
        <end position="165"/>
    </location>
</feature>
<feature type="turn" evidence="20">
    <location>
        <begin position="166"/>
        <end position="168"/>
    </location>
</feature>
<feature type="strand" evidence="20">
    <location>
        <begin position="174"/>
        <end position="176"/>
    </location>
</feature>
<feature type="helix" evidence="20">
    <location>
        <begin position="177"/>
        <end position="190"/>
    </location>
</feature>
<feature type="helix" evidence="20">
    <location>
        <begin position="191"/>
        <end position="193"/>
    </location>
</feature>
<feature type="strand" evidence="20">
    <location>
        <begin position="199"/>
        <end position="201"/>
    </location>
</feature>
<feature type="helix" evidence="20">
    <location>
        <begin position="202"/>
        <end position="213"/>
    </location>
</feature>
<feature type="helix" evidence="20">
    <location>
        <begin position="230"/>
        <end position="232"/>
    </location>
</feature>
<feature type="helix" evidence="20">
    <location>
        <begin position="235"/>
        <end position="254"/>
    </location>
</feature>
<feature type="helix" evidence="20">
    <location>
        <begin position="257"/>
        <end position="265"/>
    </location>
</feature>
<feature type="strand" evidence="20">
    <location>
        <begin position="266"/>
        <end position="268"/>
    </location>
</feature>
<feature type="turn" evidence="20">
    <location>
        <begin position="274"/>
        <end position="276"/>
    </location>
</feature>
<feature type="helix" evidence="20">
    <location>
        <begin position="277"/>
        <end position="298"/>
    </location>
</feature>
<feature type="strand" evidence="20">
    <location>
        <begin position="299"/>
        <end position="301"/>
    </location>
</feature>
<feature type="helix" evidence="20">
    <location>
        <begin position="333"/>
        <end position="365"/>
    </location>
</feature>
<feature type="strand" evidence="20">
    <location>
        <begin position="367"/>
        <end position="369"/>
    </location>
</feature>
<feature type="turn" evidence="20">
    <location>
        <begin position="371"/>
        <end position="375"/>
    </location>
</feature>
<feature type="helix" evidence="20">
    <location>
        <begin position="376"/>
        <end position="394"/>
    </location>
</feature>
<feature type="strand" evidence="20">
    <location>
        <begin position="399"/>
        <end position="401"/>
    </location>
</feature>
<feature type="strand" evidence="20">
    <location>
        <begin position="434"/>
        <end position="436"/>
    </location>
</feature>
<feature type="helix" evidence="20">
    <location>
        <begin position="437"/>
        <end position="442"/>
    </location>
</feature>
<feature type="helix" evidence="20">
    <location>
        <begin position="446"/>
        <end position="455"/>
    </location>
</feature>
<feature type="strand" evidence="20">
    <location>
        <begin position="457"/>
        <end position="460"/>
    </location>
</feature>
<feature type="helix" evidence="20">
    <location>
        <begin position="462"/>
        <end position="479"/>
    </location>
</feature>
<feature type="strand" evidence="20">
    <location>
        <begin position="482"/>
        <end position="484"/>
    </location>
</feature>
<feature type="helix" evidence="20">
    <location>
        <begin position="489"/>
        <end position="510"/>
    </location>
</feature>
<feature type="helix" evidence="20">
    <location>
        <begin position="519"/>
        <end position="533"/>
    </location>
</feature>
<feature type="helix" evidence="20">
    <location>
        <begin position="539"/>
        <end position="548"/>
    </location>
</feature>
<feature type="helix" evidence="20">
    <location>
        <begin position="551"/>
        <end position="553"/>
    </location>
</feature>
<feature type="helix" evidence="20">
    <location>
        <begin position="554"/>
        <end position="568"/>
    </location>
</feature>
<feature type="turn" evidence="20">
    <location>
        <begin position="569"/>
        <end position="571"/>
    </location>
</feature>
<feature type="helix" evidence="20">
    <location>
        <begin position="575"/>
        <end position="581"/>
    </location>
</feature>
<feature type="turn" evidence="20">
    <location>
        <begin position="582"/>
        <end position="584"/>
    </location>
</feature>
<feature type="helix" evidence="20">
    <location>
        <begin position="594"/>
        <end position="597"/>
    </location>
</feature>
<feature type="helix" evidence="20">
    <location>
        <begin position="601"/>
        <end position="604"/>
    </location>
</feature>
<feature type="strand" evidence="19">
    <location>
        <begin position="614"/>
        <end position="617"/>
    </location>
</feature>
<feature type="helix" evidence="20">
    <location>
        <begin position="618"/>
        <end position="627"/>
    </location>
</feature>
<feature type="strand" evidence="20">
    <location>
        <begin position="631"/>
        <end position="638"/>
    </location>
</feature>
<feature type="helix" evidence="20">
    <location>
        <begin position="650"/>
        <end position="663"/>
    </location>
</feature>
<feature type="helix" evidence="20">
    <location>
        <begin position="667"/>
        <end position="676"/>
    </location>
</feature>
<feature type="helix" evidence="20">
    <location>
        <begin position="732"/>
        <end position="735"/>
    </location>
</feature>
<feature type="strand" evidence="20">
    <location>
        <begin position="739"/>
        <end position="746"/>
    </location>
</feature>
<feature type="helix" evidence="20">
    <location>
        <begin position="747"/>
        <end position="755"/>
    </location>
</feature>
<feature type="strand" evidence="20">
    <location>
        <begin position="762"/>
        <end position="764"/>
    </location>
</feature>
<feature type="helix" evidence="20">
    <location>
        <begin position="774"/>
        <end position="778"/>
    </location>
</feature>
<feature type="turn" evidence="20">
    <location>
        <begin position="787"/>
        <end position="789"/>
    </location>
</feature>
<feature type="strand" evidence="20">
    <location>
        <begin position="793"/>
        <end position="795"/>
    </location>
</feature>
<feature type="turn" evidence="20">
    <location>
        <begin position="804"/>
        <end position="806"/>
    </location>
</feature>
<feature type="strand" evidence="20">
    <location>
        <begin position="807"/>
        <end position="810"/>
    </location>
</feature>
<feature type="helix" evidence="20">
    <location>
        <begin position="820"/>
        <end position="829"/>
    </location>
</feature>
<feature type="strand" evidence="20">
    <location>
        <begin position="833"/>
        <end position="838"/>
    </location>
</feature>
<feature type="strand" evidence="20">
    <location>
        <begin position="842"/>
        <end position="848"/>
    </location>
</feature>
<feature type="helix" evidence="20">
    <location>
        <begin position="850"/>
        <end position="852"/>
    </location>
</feature>
<feature type="helix" evidence="20">
    <location>
        <begin position="855"/>
        <end position="868"/>
    </location>
</feature>
<protein>
    <recommendedName>
        <fullName evidence="17">H(+)/Cl(-) exchange transporter 6</fullName>
    </recommendedName>
    <alternativeName>
        <fullName>Chloride channel protein 6</fullName>
        <shortName>ClC-6</shortName>
    </alternativeName>
    <alternativeName>
        <fullName evidence="17">Chloride transport protein 6</fullName>
    </alternativeName>
</protein>
<accession>P51797</accession>
<accession>A8K1T4</accession>
<accession>B4DGT7</accession>
<accession>F8W9R3</accession>
<accession>O60818</accession>
<accession>O60819</accession>
<accession>O60820</accession>
<accession>O60821</accession>
<accession>P78520</accession>
<accession>P78521</accession>
<accession>Q17R81</accession>
<accession>Q5SNW2</accession>
<accession>Q5SNW3</accession>
<accession>Q5SNX1</accession>
<accession>Q5SNX2</accession>
<accession>Q5SNX3</accession>
<accession>Q99427</accession>
<accession>Q99428</accession>
<accession>Q99429</accession>
<gene>
    <name evidence="18" type="primary">CLCN6</name>
    <name type="synonym">KIAA0046</name>
</gene>
<keyword id="KW-0002">3D-structure</keyword>
<keyword id="KW-0025">Alternative splicing</keyword>
<keyword id="KW-0050">Antiport</keyword>
<keyword id="KW-0067">ATP-binding</keyword>
<keyword id="KW-0129">CBS domain</keyword>
<keyword id="KW-0868">Chloride</keyword>
<keyword id="KW-0225">Disease variant</keyword>
<keyword id="KW-0967">Endosome</keyword>
<keyword id="KW-0325">Glycoprotein</keyword>
<keyword id="KW-0406">Ion transport</keyword>
<keyword id="KW-0472">Membrane</keyword>
<keyword id="KW-0523">Neurodegeneration</keyword>
<keyword id="KW-0525">Neuronal ceroid lipofuscinosis</keyword>
<keyword id="KW-0547">Nucleotide-binding</keyword>
<keyword id="KW-0597">Phosphoprotein</keyword>
<keyword id="KW-1267">Proteomics identification</keyword>
<keyword id="KW-1185">Reference proteome</keyword>
<keyword id="KW-0677">Repeat</keyword>
<keyword id="KW-0812">Transmembrane</keyword>
<keyword id="KW-1133">Transmembrane helix</keyword>
<keyword id="KW-0813">Transport</keyword>
<reference key="1">
    <citation type="journal article" date="1995" name="FEBS Lett.">
        <title>ClC-6 and ClC-7 are two novel broadly expressed members of the CLC chloride channel family.</title>
        <authorList>
            <person name="Brandt S."/>
            <person name="Jentsch T.J."/>
        </authorList>
    </citation>
    <scope>NUCLEOTIDE SEQUENCE [MRNA] (ISOFORM 1)</scope>
    <scope>TISSUE SPECIFICITY</scope>
    <scope>VARIANT GLY-198</scope>
    <source>
        <tissue>Brain</tissue>
    </source>
</reference>
<reference key="2">
    <citation type="journal article" date="1997" name="Biochem. J.">
        <title>Alternative splicing of ClC-6 (a member of the ClC chloride-channel family) transcripts generates three truncated isoforms one of which, ClC-6c, is kidney-specific.</title>
        <authorList>
            <person name="Eggermont J."/>
            <person name="Buyse G."/>
            <person name="Voets T."/>
            <person name="Tytgat J."/>
            <person name="De Smedt H."/>
            <person name="Droogmans G."/>
            <person name="Nilius B."/>
        </authorList>
    </citation>
    <scope>NUCLEOTIDE SEQUENCE [GENOMIC DNA / MRNA] (ISOFORMS 2; 3 AND 4)</scope>
    <scope>NUCLEOTIDE SEQUENCE [MRNA] OF 1-409 (ISOFORM 1)</scope>
    <scope>TISSUE SPECIFICITY</scope>
    <scope>VARIANT GLY-198</scope>
    <source>
        <tissue>Chronic myeloid leukemia cell</tissue>
    </source>
</reference>
<reference key="3">
    <citation type="journal article" date="1999" name="Biochim. Biophys. Acta">
        <title>Complete genomic structure of the CLCN6 and CLCN7 putative chloride channel genes.</title>
        <authorList>
            <person name="Kornak U."/>
            <person name="Boesl M.R."/>
            <person name="Kubisch C."/>
        </authorList>
    </citation>
    <scope>NUCLEOTIDE SEQUENCE [GENOMIC DNA] (ISOFORM 1)</scope>
    <scope>VARIANT GLY-198</scope>
</reference>
<reference key="4">
    <citation type="journal article" date="1994" name="DNA Res.">
        <title>Prediction of the coding sequences of unidentified human genes. II. The coding sequences of 40 new genes (KIAA0041-KIAA0080) deduced by analysis of cDNA clones from human cell line KG-1.</title>
        <authorList>
            <person name="Nomura N."/>
            <person name="Nagase T."/>
            <person name="Miyajima N."/>
            <person name="Sazuka T."/>
            <person name="Tanaka A."/>
            <person name="Sato S."/>
            <person name="Seki N."/>
            <person name="Kawarabayasi Y."/>
            <person name="Ishikawa K."/>
            <person name="Tabata S."/>
        </authorList>
    </citation>
    <scope>NUCLEOTIDE SEQUENCE [LARGE SCALE MRNA] (ISOFORM 1)</scope>
    <scope>VARIANT GLY-198</scope>
    <source>
        <tissue>Bone marrow</tissue>
    </source>
</reference>
<reference key="5">
    <citation type="journal article" date="2002" name="DNA Res.">
        <title>Construction of expression-ready cDNA clones for KIAA genes: manual curation of 330 KIAA cDNA clones.</title>
        <authorList>
            <person name="Nakajima D."/>
            <person name="Okazaki N."/>
            <person name="Yamakawa H."/>
            <person name="Kikuno R."/>
            <person name="Ohara O."/>
            <person name="Nagase T."/>
        </authorList>
    </citation>
    <scope>SEQUENCE REVISION</scope>
</reference>
<reference key="6">
    <citation type="journal article" date="2004" name="Nat. Genet.">
        <title>Complete sequencing and characterization of 21,243 full-length human cDNAs.</title>
        <authorList>
            <person name="Ota T."/>
            <person name="Suzuki Y."/>
            <person name="Nishikawa T."/>
            <person name="Otsuki T."/>
            <person name="Sugiyama T."/>
            <person name="Irie R."/>
            <person name="Wakamatsu A."/>
            <person name="Hayashi K."/>
            <person name="Sato H."/>
            <person name="Nagai K."/>
            <person name="Kimura K."/>
            <person name="Makita H."/>
            <person name="Sekine M."/>
            <person name="Obayashi M."/>
            <person name="Nishi T."/>
            <person name="Shibahara T."/>
            <person name="Tanaka T."/>
            <person name="Ishii S."/>
            <person name="Yamamoto J."/>
            <person name="Saito K."/>
            <person name="Kawai Y."/>
            <person name="Isono Y."/>
            <person name="Nakamura Y."/>
            <person name="Nagahari K."/>
            <person name="Murakami K."/>
            <person name="Yasuda T."/>
            <person name="Iwayanagi T."/>
            <person name="Wagatsuma M."/>
            <person name="Shiratori A."/>
            <person name="Sudo H."/>
            <person name="Hosoiri T."/>
            <person name="Kaku Y."/>
            <person name="Kodaira H."/>
            <person name="Kondo H."/>
            <person name="Sugawara M."/>
            <person name="Takahashi M."/>
            <person name="Kanda K."/>
            <person name="Yokoi T."/>
            <person name="Furuya T."/>
            <person name="Kikkawa E."/>
            <person name="Omura Y."/>
            <person name="Abe K."/>
            <person name="Kamihara K."/>
            <person name="Katsuta N."/>
            <person name="Sato K."/>
            <person name="Tanikawa M."/>
            <person name="Yamazaki M."/>
            <person name="Ninomiya K."/>
            <person name="Ishibashi T."/>
            <person name="Yamashita H."/>
            <person name="Murakawa K."/>
            <person name="Fujimori K."/>
            <person name="Tanai H."/>
            <person name="Kimata M."/>
            <person name="Watanabe M."/>
            <person name="Hiraoka S."/>
            <person name="Chiba Y."/>
            <person name="Ishida S."/>
            <person name="Ono Y."/>
            <person name="Takiguchi S."/>
            <person name="Watanabe S."/>
            <person name="Yosida M."/>
            <person name="Hotuta T."/>
            <person name="Kusano J."/>
            <person name="Kanehori K."/>
            <person name="Takahashi-Fujii A."/>
            <person name="Hara H."/>
            <person name="Tanase T.-O."/>
            <person name="Nomura Y."/>
            <person name="Togiya S."/>
            <person name="Komai F."/>
            <person name="Hara R."/>
            <person name="Takeuchi K."/>
            <person name="Arita M."/>
            <person name="Imose N."/>
            <person name="Musashino K."/>
            <person name="Yuuki H."/>
            <person name="Oshima A."/>
            <person name="Sasaki N."/>
            <person name="Aotsuka S."/>
            <person name="Yoshikawa Y."/>
            <person name="Matsunawa H."/>
            <person name="Ichihara T."/>
            <person name="Shiohata N."/>
            <person name="Sano S."/>
            <person name="Moriya S."/>
            <person name="Momiyama H."/>
            <person name="Satoh N."/>
            <person name="Takami S."/>
            <person name="Terashima Y."/>
            <person name="Suzuki O."/>
            <person name="Nakagawa S."/>
            <person name="Senoh A."/>
            <person name="Mizoguchi H."/>
            <person name="Goto Y."/>
            <person name="Shimizu F."/>
            <person name="Wakebe H."/>
            <person name="Hishigaki H."/>
            <person name="Watanabe T."/>
            <person name="Sugiyama A."/>
            <person name="Takemoto M."/>
            <person name="Kawakami B."/>
            <person name="Yamazaki M."/>
            <person name="Watanabe K."/>
            <person name="Kumagai A."/>
            <person name="Itakura S."/>
            <person name="Fukuzumi Y."/>
            <person name="Fujimori Y."/>
            <person name="Komiyama M."/>
            <person name="Tashiro H."/>
            <person name="Tanigami A."/>
            <person name="Fujiwara T."/>
            <person name="Ono T."/>
            <person name="Yamada K."/>
            <person name="Fujii Y."/>
            <person name="Ozaki K."/>
            <person name="Hirao M."/>
            <person name="Ohmori Y."/>
            <person name="Kawabata A."/>
            <person name="Hikiji T."/>
            <person name="Kobatake N."/>
            <person name="Inagaki H."/>
            <person name="Ikema Y."/>
            <person name="Okamoto S."/>
            <person name="Okitani R."/>
            <person name="Kawakami T."/>
            <person name="Noguchi S."/>
            <person name="Itoh T."/>
            <person name="Shigeta K."/>
            <person name="Senba T."/>
            <person name="Matsumura K."/>
            <person name="Nakajima Y."/>
            <person name="Mizuno T."/>
            <person name="Morinaga M."/>
            <person name="Sasaki M."/>
            <person name="Togashi T."/>
            <person name="Oyama M."/>
            <person name="Hata H."/>
            <person name="Watanabe M."/>
            <person name="Komatsu T."/>
            <person name="Mizushima-Sugano J."/>
            <person name="Satoh T."/>
            <person name="Shirai Y."/>
            <person name="Takahashi Y."/>
            <person name="Nakagawa K."/>
            <person name="Okumura K."/>
            <person name="Nagase T."/>
            <person name="Nomura N."/>
            <person name="Kikuchi H."/>
            <person name="Masuho Y."/>
            <person name="Yamashita R."/>
            <person name="Nakai K."/>
            <person name="Yada T."/>
            <person name="Nakamura Y."/>
            <person name="Ohara O."/>
            <person name="Isogai T."/>
            <person name="Sugano S."/>
        </authorList>
    </citation>
    <scope>NUCLEOTIDE SEQUENCE [LARGE SCALE MRNA] (ISOFORMS 1 AND 6)</scope>
    <scope>VARIANT GLY-198</scope>
    <source>
        <tissue>Brain</tissue>
        <tissue>Hippocampus</tissue>
    </source>
</reference>
<reference key="7">
    <citation type="journal article" date="2006" name="Nature">
        <title>The DNA sequence and biological annotation of human chromosome 1.</title>
        <authorList>
            <person name="Gregory S.G."/>
            <person name="Barlow K.F."/>
            <person name="McLay K.E."/>
            <person name="Kaul R."/>
            <person name="Swarbreck D."/>
            <person name="Dunham A."/>
            <person name="Scott C.E."/>
            <person name="Howe K.L."/>
            <person name="Woodfine K."/>
            <person name="Spencer C.C.A."/>
            <person name="Jones M.C."/>
            <person name="Gillson C."/>
            <person name="Searle S."/>
            <person name="Zhou Y."/>
            <person name="Kokocinski F."/>
            <person name="McDonald L."/>
            <person name="Evans R."/>
            <person name="Phillips K."/>
            <person name="Atkinson A."/>
            <person name="Cooper R."/>
            <person name="Jones C."/>
            <person name="Hall R.E."/>
            <person name="Andrews T.D."/>
            <person name="Lloyd C."/>
            <person name="Ainscough R."/>
            <person name="Almeida J.P."/>
            <person name="Ambrose K.D."/>
            <person name="Anderson F."/>
            <person name="Andrew R.W."/>
            <person name="Ashwell R.I.S."/>
            <person name="Aubin K."/>
            <person name="Babbage A.K."/>
            <person name="Bagguley C.L."/>
            <person name="Bailey J."/>
            <person name="Beasley H."/>
            <person name="Bethel G."/>
            <person name="Bird C.P."/>
            <person name="Bray-Allen S."/>
            <person name="Brown J.Y."/>
            <person name="Brown A.J."/>
            <person name="Buckley D."/>
            <person name="Burton J."/>
            <person name="Bye J."/>
            <person name="Carder C."/>
            <person name="Chapman J.C."/>
            <person name="Clark S.Y."/>
            <person name="Clarke G."/>
            <person name="Clee C."/>
            <person name="Cobley V."/>
            <person name="Collier R.E."/>
            <person name="Corby N."/>
            <person name="Coville G.J."/>
            <person name="Davies J."/>
            <person name="Deadman R."/>
            <person name="Dunn M."/>
            <person name="Earthrowl M."/>
            <person name="Ellington A.G."/>
            <person name="Errington H."/>
            <person name="Frankish A."/>
            <person name="Frankland J."/>
            <person name="French L."/>
            <person name="Garner P."/>
            <person name="Garnett J."/>
            <person name="Gay L."/>
            <person name="Ghori M.R.J."/>
            <person name="Gibson R."/>
            <person name="Gilby L.M."/>
            <person name="Gillett W."/>
            <person name="Glithero R.J."/>
            <person name="Grafham D.V."/>
            <person name="Griffiths C."/>
            <person name="Griffiths-Jones S."/>
            <person name="Grocock R."/>
            <person name="Hammond S."/>
            <person name="Harrison E.S.I."/>
            <person name="Hart E."/>
            <person name="Haugen E."/>
            <person name="Heath P.D."/>
            <person name="Holmes S."/>
            <person name="Holt K."/>
            <person name="Howden P.J."/>
            <person name="Hunt A.R."/>
            <person name="Hunt S.E."/>
            <person name="Hunter G."/>
            <person name="Isherwood J."/>
            <person name="James R."/>
            <person name="Johnson C."/>
            <person name="Johnson D."/>
            <person name="Joy A."/>
            <person name="Kay M."/>
            <person name="Kershaw J.K."/>
            <person name="Kibukawa M."/>
            <person name="Kimberley A.M."/>
            <person name="King A."/>
            <person name="Knights A.J."/>
            <person name="Lad H."/>
            <person name="Laird G."/>
            <person name="Lawlor S."/>
            <person name="Leongamornlert D.A."/>
            <person name="Lloyd D.M."/>
            <person name="Loveland J."/>
            <person name="Lovell J."/>
            <person name="Lush M.J."/>
            <person name="Lyne R."/>
            <person name="Martin S."/>
            <person name="Mashreghi-Mohammadi M."/>
            <person name="Matthews L."/>
            <person name="Matthews N.S.W."/>
            <person name="McLaren S."/>
            <person name="Milne S."/>
            <person name="Mistry S."/>
            <person name="Moore M.J.F."/>
            <person name="Nickerson T."/>
            <person name="O'Dell C.N."/>
            <person name="Oliver K."/>
            <person name="Palmeiri A."/>
            <person name="Palmer S.A."/>
            <person name="Parker A."/>
            <person name="Patel D."/>
            <person name="Pearce A.V."/>
            <person name="Peck A.I."/>
            <person name="Pelan S."/>
            <person name="Phelps K."/>
            <person name="Phillimore B.J."/>
            <person name="Plumb R."/>
            <person name="Rajan J."/>
            <person name="Raymond C."/>
            <person name="Rouse G."/>
            <person name="Saenphimmachak C."/>
            <person name="Sehra H.K."/>
            <person name="Sheridan E."/>
            <person name="Shownkeen R."/>
            <person name="Sims S."/>
            <person name="Skuce C.D."/>
            <person name="Smith M."/>
            <person name="Steward C."/>
            <person name="Subramanian S."/>
            <person name="Sycamore N."/>
            <person name="Tracey A."/>
            <person name="Tromans A."/>
            <person name="Van Helmond Z."/>
            <person name="Wall M."/>
            <person name="Wallis J.M."/>
            <person name="White S."/>
            <person name="Whitehead S.L."/>
            <person name="Wilkinson J.E."/>
            <person name="Willey D.L."/>
            <person name="Williams H."/>
            <person name="Wilming L."/>
            <person name="Wray P.W."/>
            <person name="Wu Z."/>
            <person name="Coulson A."/>
            <person name="Vaudin M."/>
            <person name="Sulston J.E."/>
            <person name="Durbin R.M."/>
            <person name="Hubbard T."/>
            <person name="Wooster R."/>
            <person name="Dunham I."/>
            <person name="Carter N.P."/>
            <person name="McVean G."/>
            <person name="Ross M.T."/>
            <person name="Harrow J."/>
            <person name="Olson M.V."/>
            <person name="Beck S."/>
            <person name="Rogers J."/>
            <person name="Bentley D.R."/>
        </authorList>
    </citation>
    <scope>NUCLEOTIDE SEQUENCE [LARGE SCALE GENOMIC DNA]</scope>
</reference>
<reference key="8">
    <citation type="submission" date="2005-07" db="EMBL/GenBank/DDBJ databases">
        <authorList>
            <person name="Mural R.J."/>
            <person name="Istrail S."/>
            <person name="Sutton G.G."/>
            <person name="Florea L."/>
            <person name="Halpern A.L."/>
            <person name="Mobarry C.M."/>
            <person name="Lippert R."/>
            <person name="Walenz B."/>
            <person name="Shatkay H."/>
            <person name="Dew I."/>
            <person name="Miller J.R."/>
            <person name="Flanigan M.J."/>
            <person name="Edwards N.J."/>
            <person name="Bolanos R."/>
            <person name="Fasulo D."/>
            <person name="Halldorsson B.V."/>
            <person name="Hannenhalli S."/>
            <person name="Turner R."/>
            <person name="Yooseph S."/>
            <person name="Lu F."/>
            <person name="Nusskern D.R."/>
            <person name="Shue B.C."/>
            <person name="Zheng X.H."/>
            <person name="Zhong F."/>
            <person name="Delcher A.L."/>
            <person name="Huson D.H."/>
            <person name="Kravitz S.A."/>
            <person name="Mouchard L."/>
            <person name="Reinert K."/>
            <person name="Remington K.A."/>
            <person name="Clark A.G."/>
            <person name="Waterman M.S."/>
            <person name="Eichler E.E."/>
            <person name="Adams M.D."/>
            <person name="Hunkapiller M.W."/>
            <person name="Myers E.W."/>
            <person name="Venter J.C."/>
        </authorList>
    </citation>
    <scope>NUCLEOTIDE SEQUENCE [LARGE SCALE GENOMIC DNA]</scope>
    <scope>VARIANT GLY-198</scope>
</reference>
<reference key="9">
    <citation type="journal article" date="2004" name="Genome Res.">
        <title>The status, quality, and expansion of the NIH full-length cDNA project: the Mammalian Gene Collection (MGC).</title>
        <authorList>
            <consortium name="The MGC Project Team"/>
        </authorList>
    </citation>
    <scope>NUCLEOTIDE SEQUENCE [LARGE SCALE MRNA] (ISOFORM 1)</scope>
    <scope>VARIANT GLY-198</scope>
    <source>
        <tissue>Brain</tissue>
    </source>
</reference>
<reference key="10">
    <citation type="journal article" date="1999" name="J. Mol. Cell. Cardiol.">
        <title>Expression of CLCN voltage-gated chloride channel genes in human blood vessels.</title>
        <authorList>
            <person name="Lamb F.S."/>
            <person name="Clayton G.H."/>
            <person name="Liu B.-X."/>
            <person name="Smith R.L."/>
            <person name="Barna T.J."/>
            <person name="Schutte B.C."/>
        </authorList>
    </citation>
    <scope>TISSUE SPECIFICITY</scope>
    <source>
        <tissue>Aortic endothelium</tissue>
        <tissue>Vascular smooth muscle</tissue>
    </source>
</reference>
<reference key="11">
    <citation type="journal article" date="2007" name="PLoS ONE">
        <title>Human ClC-6 is a late endosomal glycoprotein that associates with detergent-resistant lipid domains.</title>
        <authorList>
            <person name="Ignoul S."/>
            <person name="Simaels J."/>
            <person name="Hermans D."/>
            <person name="Annaert W."/>
            <person name="Eggermont J."/>
        </authorList>
    </citation>
    <scope>SUBCELLULAR LOCATION</scope>
    <scope>GLYCOSYLATION</scope>
    <scope>MUTAGENESIS OF ASN-410; ASN-422 AND ASN-432</scope>
</reference>
<reference key="12">
    <citation type="journal article" date="2010" name="J. Biol. Chem.">
        <title>The late endosomal ClC-6 mediates proton/chloride countertransport in heterologous plasma membrane expression.</title>
        <authorList>
            <person name="Neagoe I."/>
            <person name="Stauber T."/>
            <person name="Fidzinski P."/>
            <person name="Bergsdorf E.Y."/>
            <person name="Jentsch T.J."/>
        </authorList>
    </citation>
    <scope>FUNCTION</scope>
    <scope>CATALYTIC ACTIVITY</scope>
    <scope>MUTAGENESIS OF SER-157; GLU-200; GLU-267 AND TYR-576</scope>
</reference>
<reference key="13">
    <citation type="journal article" date="2020" name="Am. J. Hum. Genet.">
        <title>A Recurrent Gain-of-Function Mutation in CLCN6, Encoding the ClC-6 Cl-/H+-Exchanger, Causes Early-Onset Neurodegeneration.</title>
        <authorList>
            <person name="Polovitskaya M.M."/>
            <person name="Barbini C."/>
            <person name="Martinelli D."/>
            <person name="Harms F.L."/>
            <person name="Cole F.S."/>
            <person name="Calligari P."/>
            <person name="Bocchinfuso G."/>
            <person name="Stella L."/>
            <person name="Ciolfi A."/>
            <person name="Niceta M."/>
            <person name="Rizza T."/>
            <person name="Shinawi M."/>
            <person name="Sisco K."/>
            <person name="Johannsen J."/>
            <person name="Denecke J."/>
            <person name="Carrozzo R."/>
            <person name="Wegner D.J."/>
            <person name="Kutsche K."/>
            <person name="Tartaglia M."/>
            <person name="Jentsch T.J."/>
        </authorList>
    </citation>
    <scope>VARIANT CLN15 CYS-553</scope>
    <scope>CHARACTERIZATION OF VARIANT CLN15 CYS-553</scope>
    <scope>FUNCTION</scope>
    <scope>CATALYTIC ACTIVITY</scope>
    <scope>SUBCELLULAR LOCATION</scope>
    <scope>INVOLVEMENT IN CLN15</scope>
</reference>